<reference key="1">
    <citation type="journal article" date="2001" name="Proc. Natl. Acad. Sci. U.S.A.">
        <title>The complete genome of the crenarchaeon Sulfolobus solfataricus P2.</title>
        <authorList>
            <person name="She Q."/>
            <person name="Singh R.K."/>
            <person name="Confalonieri F."/>
            <person name="Zivanovic Y."/>
            <person name="Allard G."/>
            <person name="Awayez M.J."/>
            <person name="Chan-Weiher C.C.-Y."/>
            <person name="Clausen I.G."/>
            <person name="Curtis B.A."/>
            <person name="De Moors A."/>
            <person name="Erauso G."/>
            <person name="Fletcher C."/>
            <person name="Gordon P.M.K."/>
            <person name="Heikamp-de Jong I."/>
            <person name="Jeffries A.C."/>
            <person name="Kozera C.J."/>
            <person name="Medina N."/>
            <person name="Peng X."/>
            <person name="Thi-Ngoc H.P."/>
            <person name="Redder P."/>
            <person name="Schenk M.E."/>
            <person name="Theriault C."/>
            <person name="Tolstrup N."/>
            <person name="Charlebois R.L."/>
            <person name="Doolittle W.F."/>
            <person name="Duguet M."/>
            <person name="Gaasterland T."/>
            <person name="Garrett R.A."/>
            <person name="Ragan M.A."/>
            <person name="Sensen C.W."/>
            <person name="Van der Oost J."/>
        </authorList>
    </citation>
    <scope>NUCLEOTIDE SEQUENCE [LARGE SCALE GENOMIC DNA]</scope>
    <source>
        <strain>ATCC 35092 / DSM 1617 / JCM 11322 / P2</strain>
    </source>
</reference>
<reference key="2">
    <citation type="journal article" date="2005" name="FEBS J.">
        <title>Allosteric properties of the GTP activated and CTP inhibited uracil phosphoribosyltransferase from the thermoacidophilic archaeon Sulfolobus solfataricus.</title>
        <authorList>
            <person name="Jensen K.F."/>
            <person name="Arent S."/>
            <person name="Larsen S."/>
            <person name="Schack L."/>
        </authorList>
    </citation>
    <scope>CATALYTIC ACTIVITY</scope>
    <scope>FUNCTION</scope>
    <scope>BIOPHYSICOCHEMICAL PROPERTIES</scope>
    <scope>SUBUNIT</scope>
    <scope>KINETIC PARAMETERS</scope>
    <scope>ACTIVITY REGULATION</scope>
    <scope>REACTION MECHANISM</scope>
    <source>
        <strain>ATCC 35092 / DSM 1617 / JCM 11322 / P2</strain>
    </source>
</reference>
<reference key="3">
    <citation type="journal article" date="2005" name="Biochemistry">
        <title>Allosteric regulation and communication between subunits in uracil phosphoribosyltransferase from Sulfolobus solfataricus.</title>
        <authorList>
            <person name="Arent S."/>
            <person name="Harris P."/>
            <person name="Jensen K.F."/>
            <person name="Larsen S."/>
        </authorList>
    </citation>
    <scope>X-RAY CRYSTALLOGRAPHY (1.8 ANGSTROMS) IN COMPLEXES WITH UMP AND CTP</scope>
    <scope>REACTION MECHANISM</scope>
</reference>
<reference key="4">
    <citation type="journal article" date="2009" name="J. Mol. Biol.">
        <title>Structural and kinetic studies of the allosteric transition in Sulfolobus solfataricus uracil phosphoribosyltransferase: Permanent activation by engineering of the C-terminus.</title>
        <authorList>
            <person name="Christoffersen S."/>
            <person name="Kadziola A."/>
            <person name="Johansson E."/>
            <person name="Rasmussen M."/>
            <person name="Willemoes M."/>
            <person name="Jensen K.F."/>
        </authorList>
    </citation>
    <scope>X-RAY CRYSTALLOGRAPHY (2.8 ANGSTROMS) IN COMPLEXES WITH GTP; 5-PHOSPHO-ALPHA-D-RIBOSE 1-DIPHOSPHATE; RIBOSE-5-PHOSPHATE AND DIPHOSPHATE</scope>
    <scope>REACTION MECHANISM</scope>
</reference>
<dbReference type="EC" id="2.4.2.9"/>
<dbReference type="EMBL" id="AE006641">
    <property type="protein sequence ID" value="AAK40574.1"/>
    <property type="molecule type" value="Genomic_DNA"/>
</dbReference>
<dbReference type="PIR" id="G90164">
    <property type="entry name" value="G90164"/>
</dbReference>
<dbReference type="RefSeq" id="WP_009990487.1">
    <property type="nucleotide sequence ID" value="NC_002754.1"/>
</dbReference>
<dbReference type="PDB" id="1VST">
    <property type="method" value="X-ray"/>
    <property type="resolution" value="2.80 A"/>
    <property type="chains" value="A=1-216"/>
</dbReference>
<dbReference type="PDB" id="1XTT">
    <property type="method" value="X-ray"/>
    <property type="resolution" value="1.80 A"/>
    <property type="chains" value="A/B/C/D=1-216"/>
</dbReference>
<dbReference type="PDB" id="1XTU">
    <property type="method" value="X-ray"/>
    <property type="resolution" value="2.80 A"/>
    <property type="chains" value="A/B/C/D/E/F/G/H=1-216"/>
</dbReference>
<dbReference type="PDB" id="1XTV">
    <property type="method" value="X-ray"/>
    <property type="resolution" value="2.60 A"/>
    <property type="chains" value="A/B/C/D/E/F/G/H=1-216"/>
</dbReference>
<dbReference type="PDB" id="3G6W">
    <property type="method" value="X-ray"/>
    <property type="resolution" value="2.90 A"/>
    <property type="chains" value="A/B/C/D=1-216"/>
</dbReference>
<dbReference type="PDBsum" id="1VST"/>
<dbReference type="PDBsum" id="1XTT"/>
<dbReference type="PDBsum" id="1XTU"/>
<dbReference type="PDBsum" id="1XTV"/>
<dbReference type="PDBsum" id="3G6W"/>
<dbReference type="SMR" id="Q980Q4"/>
<dbReference type="FunCoup" id="Q980Q4">
    <property type="interactions" value="134"/>
</dbReference>
<dbReference type="STRING" id="273057.SSO0231"/>
<dbReference type="PaxDb" id="273057-SSO0231"/>
<dbReference type="EnsemblBacteria" id="AAK40574">
    <property type="protein sequence ID" value="AAK40574"/>
    <property type="gene ID" value="SSO0231"/>
</dbReference>
<dbReference type="GeneID" id="44129202"/>
<dbReference type="KEGG" id="sso:SSO0231"/>
<dbReference type="PATRIC" id="fig|273057.12.peg.229"/>
<dbReference type="eggNOG" id="arCOG04128">
    <property type="taxonomic scope" value="Archaea"/>
</dbReference>
<dbReference type="HOGENOM" id="CLU_067096_2_0_2"/>
<dbReference type="InParanoid" id="Q980Q4"/>
<dbReference type="PhylomeDB" id="Q980Q4"/>
<dbReference type="BRENDA" id="2.4.2.9">
    <property type="organism ID" value="6163"/>
</dbReference>
<dbReference type="UniPathway" id="UPA00574">
    <property type="reaction ID" value="UER00636"/>
</dbReference>
<dbReference type="EvolutionaryTrace" id="Q980Q4"/>
<dbReference type="Proteomes" id="UP000001974">
    <property type="component" value="Chromosome"/>
</dbReference>
<dbReference type="GO" id="GO:0005829">
    <property type="term" value="C:cytosol"/>
    <property type="evidence" value="ECO:0000318"/>
    <property type="project" value="GO_Central"/>
</dbReference>
<dbReference type="GO" id="GO:0005525">
    <property type="term" value="F:GTP binding"/>
    <property type="evidence" value="ECO:0007669"/>
    <property type="project" value="UniProtKB-KW"/>
</dbReference>
<dbReference type="GO" id="GO:0004422">
    <property type="term" value="F:hypoxanthine phosphoribosyltransferase activity"/>
    <property type="evidence" value="ECO:0000318"/>
    <property type="project" value="GO_Central"/>
</dbReference>
<dbReference type="GO" id="GO:0000287">
    <property type="term" value="F:magnesium ion binding"/>
    <property type="evidence" value="ECO:0000318"/>
    <property type="project" value="GO_Central"/>
</dbReference>
<dbReference type="GO" id="GO:0004845">
    <property type="term" value="F:uracil phosphoribosyltransferase activity"/>
    <property type="evidence" value="ECO:0007669"/>
    <property type="project" value="UniProtKB-UniRule"/>
</dbReference>
<dbReference type="GO" id="GO:0032263">
    <property type="term" value="P:GMP salvage"/>
    <property type="evidence" value="ECO:0000318"/>
    <property type="project" value="GO_Central"/>
</dbReference>
<dbReference type="GO" id="GO:0006178">
    <property type="term" value="P:guanine salvage"/>
    <property type="evidence" value="ECO:0000318"/>
    <property type="project" value="GO_Central"/>
</dbReference>
<dbReference type="GO" id="GO:0046100">
    <property type="term" value="P:hypoxanthine metabolic process"/>
    <property type="evidence" value="ECO:0000318"/>
    <property type="project" value="GO_Central"/>
</dbReference>
<dbReference type="GO" id="GO:0032264">
    <property type="term" value="P:IMP salvage"/>
    <property type="evidence" value="ECO:0000318"/>
    <property type="project" value="GO_Central"/>
</dbReference>
<dbReference type="GO" id="GO:0044206">
    <property type="term" value="P:UMP salvage"/>
    <property type="evidence" value="ECO:0007669"/>
    <property type="project" value="UniProtKB-UniRule"/>
</dbReference>
<dbReference type="GO" id="GO:0006223">
    <property type="term" value="P:uracil salvage"/>
    <property type="evidence" value="ECO:0007669"/>
    <property type="project" value="InterPro"/>
</dbReference>
<dbReference type="CDD" id="cd06223">
    <property type="entry name" value="PRTases_typeI"/>
    <property type="match status" value="1"/>
</dbReference>
<dbReference type="Gene3D" id="3.40.50.2020">
    <property type="match status" value="1"/>
</dbReference>
<dbReference type="HAMAP" id="MF_01218_A">
    <property type="entry name" value="Upp_A"/>
    <property type="match status" value="1"/>
</dbReference>
<dbReference type="InterPro" id="IPR000836">
    <property type="entry name" value="PRibTrfase_dom"/>
</dbReference>
<dbReference type="InterPro" id="IPR029057">
    <property type="entry name" value="PRTase-like"/>
</dbReference>
<dbReference type="InterPro" id="IPR034331">
    <property type="entry name" value="Upp_A"/>
</dbReference>
<dbReference type="InterPro" id="IPR005765">
    <property type="entry name" value="Ura_phspho_trans"/>
</dbReference>
<dbReference type="NCBIfam" id="NF001097">
    <property type="entry name" value="PRK00129.1"/>
    <property type="match status" value="1"/>
</dbReference>
<dbReference type="NCBIfam" id="TIGR01091">
    <property type="entry name" value="upp"/>
    <property type="match status" value="1"/>
</dbReference>
<dbReference type="Pfam" id="PF14681">
    <property type="entry name" value="UPRTase"/>
    <property type="match status" value="1"/>
</dbReference>
<dbReference type="SUPFAM" id="SSF53271">
    <property type="entry name" value="PRTase-like"/>
    <property type="match status" value="1"/>
</dbReference>
<evidence type="ECO:0000250" key="1"/>
<evidence type="ECO:0000269" key="2">
    <source>
    </source>
</evidence>
<evidence type="ECO:0000305" key="3"/>
<evidence type="ECO:0007829" key="4">
    <source>
        <dbReference type="PDB" id="1XTT"/>
    </source>
</evidence>
<accession>Q980Q4</accession>
<protein>
    <recommendedName>
        <fullName>Uracil phosphoribosyltransferase</fullName>
        <ecNumber>2.4.2.9</ecNumber>
    </recommendedName>
    <alternativeName>
        <fullName>UMP pyrophosphorylase</fullName>
    </alternativeName>
    <alternativeName>
        <fullName>UPRTase</fullName>
    </alternativeName>
</protein>
<comment type="function">
    <text evidence="2">Catalyzes the conversion of uracil and 5-phospho-alpha-D-ribose 1-diphosphate (PRPP) to UMP and diphosphate.</text>
</comment>
<comment type="catalytic activity">
    <reaction evidence="2">
        <text>UMP + diphosphate = 5-phospho-alpha-D-ribose 1-diphosphate + uracil</text>
        <dbReference type="Rhea" id="RHEA:13017"/>
        <dbReference type="ChEBI" id="CHEBI:17568"/>
        <dbReference type="ChEBI" id="CHEBI:33019"/>
        <dbReference type="ChEBI" id="CHEBI:57865"/>
        <dbReference type="ChEBI" id="CHEBI:58017"/>
        <dbReference type="EC" id="2.4.2.9"/>
    </reaction>
</comment>
<comment type="cofactor">
    <cofactor evidence="1">
        <name>Mg(2+)</name>
        <dbReference type="ChEBI" id="CHEBI:18420"/>
    </cofactor>
    <text evidence="1">Binds 1 Mg(2+) ion per subunit. The magnesium is bound as Mg-PRPP.</text>
</comment>
<comment type="activity regulation">
    <text evidence="2">Allosterically activated by GTP. Inhibited by CTP and UMP in combination.</text>
</comment>
<comment type="biophysicochemical properties">
    <kinetics>
        <KM evidence="2">55 uM for 5-phospho-alpha-D-ribose 1-diphosphate (in the presence of 1 mM GTP)</KM>
        <KM evidence="2">19 uM for 5-phospho-alpha-D-ribose 1-diphosphate (without GTP)</KM>
        <KM evidence="2">27 uM for uracil (in the presence of 1 mM GTP)</KM>
        <KM evidence="2">1.4 uM for uracil (without GTP)</KM>
        <Vmax evidence="2">15.8 umol/min/mg enzyme (in the presence of 1 mM GTP)</Vmax>
        <Vmax evidence="2">0.92 umol/min/mg enzyme (without GTP)</Vmax>
    </kinetics>
    <phDependence>
        <text evidence="2">Optimum pH is 5.0-5.6 at 60 degrees Celsius.</text>
    </phDependence>
</comment>
<comment type="pathway">
    <text>Pyrimidine metabolism; UMP biosynthesis via salvage pathway; UMP from uracil: step 1/1.</text>
</comment>
<comment type="subunit">
    <text evidence="2">Homotetramer.</text>
</comment>
<comment type="similarity">
    <text evidence="3">Belongs to the UPRTase family.</text>
</comment>
<organism>
    <name type="scientific">Saccharolobus solfataricus (strain ATCC 35092 / DSM 1617 / JCM 11322 / P2)</name>
    <name type="common">Sulfolobus solfataricus</name>
    <dbReference type="NCBI Taxonomy" id="273057"/>
    <lineage>
        <taxon>Archaea</taxon>
        <taxon>Thermoproteota</taxon>
        <taxon>Thermoprotei</taxon>
        <taxon>Sulfolobales</taxon>
        <taxon>Sulfolobaceae</taxon>
        <taxon>Saccharolobus</taxon>
    </lineage>
</organism>
<keyword id="KW-0002">3D-structure</keyword>
<keyword id="KW-0021">Allosteric enzyme</keyword>
<keyword id="KW-0328">Glycosyltransferase</keyword>
<keyword id="KW-0342">GTP-binding</keyword>
<keyword id="KW-0460">Magnesium</keyword>
<keyword id="KW-0547">Nucleotide-binding</keyword>
<keyword id="KW-1185">Reference proteome</keyword>
<keyword id="KW-0808">Transferase</keyword>
<name>UPP_SACS2</name>
<gene>
    <name type="primary">upp</name>
    <name type="ordered locus">SSO0231</name>
</gene>
<proteinExistence type="evidence at protein level"/>
<feature type="chain" id="PRO_0000120927" description="Uracil phosphoribosyltransferase">
    <location>
        <begin position="1"/>
        <end position="216"/>
    </location>
</feature>
<feature type="binding site">
    <location>
        <begin position="29"/>
        <end position="30"/>
    </location>
    <ligand>
        <name>CTP</name>
        <dbReference type="ChEBI" id="CHEBI:37563"/>
    </ligand>
</feature>
<feature type="binding site">
    <location>
        <begin position="30"/>
        <end position="34"/>
    </location>
    <ligand>
        <name>GTP</name>
        <dbReference type="ChEBI" id="CHEBI:37565"/>
    </ligand>
</feature>
<feature type="binding site">
    <location>
        <position position="37"/>
    </location>
    <ligand>
        <name>CTP</name>
        <dbReference type="ChEBI" id="CHEBI:37563"/>
    </ligand>
</feature>
<feature type="binding site">
    <location>
        <position position="80"/>
    </location>
    <ligand>
        <name>5-phospho-alpha-D-ribose 1-diphosphate</name>
        <dbReference type="ChEBI" id="CHEBI:58017"/>
    </ligand>
</feature>
<feature type="binding site">
    <location>
        <begin position="87"/>
        <end position="96"/>
    </location>
    <ligand>
        <name>CTP</name>
        <dbReference type="ChEBI" id="CHEBI:37563"/>
    </ligand>
</feature>
<feature type="binding site">
    <location>
        <position position="105"/>
    </location>
    <ligand>
        <name>5-phospho-alpha-D-ribose 1-diphosphate</name>
        <dbReference type="ChEBI" id="CHEBI:58017"/>
    </ligand>
</feature>
<feature type="binding site">
    <location>
        <begin position="140"/>
        <end position="148"/>
    </location>
    <ligand>
        <name>5-phospho-alpha-D-ribose 1-diphosphate</name>
        <dbReference type="ChEBI" id="CHEBI:58017"/>
    </ligand>
</feature>
<feature type="binding site">
    <location>
        <position position="203"/>
    </location>
    <ligand>
        <name>uracil</name>
        <dbReference type="ChEBI" id="CHEBI:17568"/>
    </ligand>
</feature>
<feature type="binding site">
    <location>
        <begin position="208"/>
        <end position="210"/>
    </location>
    <ligand>
        <name>uracil</name>
        <dbReference type="ChEBI" id="CHEBI:17568"/>
    </ligand>
</feature>
<feature type="binding site">
    <location>
        <position position="209"/>
    </location>
    <ligand>
        <name>5-phospho-alpha-D-ribose 1-diphosphate</name>
        <dbReference type="ChEBI" id="CHEBI:58017"/>
    </ligand>
</feature>
<feature type="strand" evidence="4">
    <location>
        <begin position="3"/>
        <end position="5"/>
    </location>
</feature>
<feature type="helix" evidence="4">
    <location>
        <begin position="9"/>
        <end position="19"/>
    </location>
</feature>
<feature type="helix" evidence="4">
    <location>
        <begin position="25"/>
        <end position="44"/>
    </location>
</feature>
<feature type="strand" evidence="4">
    <location>
        <begin position="50"/>
        <end position="55"/>
    </location>
</feature>
<feature type="strand" evidence="4">
    <location>
        <begin position="61"/>
        <end position="66"/>
    </location>
</feature>
<feature type="helix" evidence="4">
    <location>
        <begin position="68"/>
        <end position="71"/>
    </location>
</feature>
<feature type="strand" evidence="4">
    <location>
        <begin position="72"/>
        <end position="79"/>
    </location>
</feature>
<feature type="turn" evidence="4">
    <location>
        <begin position="80"/>
        <end position="82"/>
    </location>
</feature>
<feature type="helix" evidence="4">
    <location>
        <begin position="83"/>
        <end position="92"/>
    </location>
</feature>
<feature type="strand" evidence="4">
    <location>
        <begin position="97"/>
        <end position="105"/>
    </location>
</feature>
<feature type="strand" evidence="4">
    <location>
        <begin position="119"/>
        <end position="125"/>
    </location>
</feature>
<feature type="turn" evidence="4">
    <location>
        <begin position="131"/>
        <end position="133"/>
    </location>
</feature>
<feature type="strand" evidence="4">
    <location>
        <begin position="135"/>
        <end position="139"/>
    </location>
</feature>
<feature type="strand" evidence="4">
    <location>
        <begin position="141"/>
        <end position="146"/>
    </location>
</feature>
<feature type="helix" evidence="4">
    <location>
        <begin position="147"/>
        <end position="156"/>
    </location>
</feature>
<feature type="helix" evidence="4">
    <location>
        <begin position="157"/>
        <end position="159"/>
    </location>
</feature>
<feature type="strand" evidence="4">
    <location>
        <begin position="162"/>
        <end position="167"/>
    </location>
</feature>
<feature type="strand" evidence="4">
    <location>
        <begin position="169"/>
        <end position="172"/>
    </location>
</feature>
<feature type="helix" evidence="4">
    <location>
        <begin position="173"/>
        <end position="182"/>
    </location>
</feature>
<feature type="strand" evidence="4">
    <location>
        <begin position="186"/>
        <end position="197"/>
    </location>
</feature>
<feature type="strand" evidence="4">
    <location>
        <begin position="203"/>
        <end position="206"/>
    </location>
</feature>
<feature type="helix" evidence="4">
    <location>
        <begin position="210"/>
        <end position="215"/>
    </location>
</feature>
<sequence length="216" mass="24150">MPLYVIDKPITLHILTQLRDKYTDQINFRKNLVRLGRILGYEISNTLDYEIVEVETPLGVKTKGVDITDLNNIVIINILRAAVPLVEGLLKAFPKARQGVIGASRVEVDGKEVPKDMDVYIYYKKIPDIRAKVDNVIIADPMIATASTMLKVLEEVVKANPKRIYIVSIISSEYGVNKILSKYPFIYLFTVAIDPELNNKGYILPGLGDAGDRAFG</sequence>